<feature type="chain" id="PRO_0000231184" description="UDP-N-acetylglucosamine 1-carboxyvinyltransferase">
    <location>
        <begin position="1"/>
        <end position="449"/>
    </location>
</feature>
<feature type="active site" description="Proton donor" evidence="1">
    <location>
        <position position="145"/>
    </location>
</feature>
<feature type="binding site" evidence="1">
    <location>
        <begin position="51"/>
        <end position="52"/>
    </location>
    <ligand>
        <name>phosphoenolpyruvate</name>
        <dbReference type="ChEBI" id="CHEBI:58702"/>
    </ligand>
</feature>
<feature type="binding site" evidence="1">
    <location>
        <position position="121"/>
    </location>
    <ligand>
        <name>UDP-N-acetyl-alpha-D-glucosamine</name>
        <dbReference type="ChEBI" id="CHEBI:57705"/>
    </ligand>
</feature>
<feature type="binding site" evidence="1">
    <location>
        <begin position="150"/>
        <end position="154"/>
    </location>
    <ligand>
        <name>UDP-N-acetyl-alpha-D-glucosamine</name>
        <dbReference type="ChEBI" id="CHEBI:57705"/>
    </ligand>
</feature>
<feature type="binding site" evidence="1">
    <location>
        <position position="333"/>
    </location>
    <ligand>
        <name>UDP-N-acetyl-alpha-D-glucosamine</name>
        <dbReference type="ChEBI" id="CHEBI:57705"/>
    </ligand>
</feature>
<feature type="binding site" evidence="1">
    <location>
        <position position="355"/>
    </location>
    <ligand>
        <name>UDP-N-acetyl-alpha-D-glucosamine</name>
        <dbReference type="ChEBI" id="CHEBI:57705"/>
    </ligand>
</feature>
<feature type="modified residue" description="2-(S-cysteinyl)pyruvic acid O-phosphothioketal" evidence="1">
    <location>
        <position position="145"/>
    </location>
</feature>
<comment type="function">
    <text evidence="1">Cell wall formation. Adds enolpyruvyl to UDP-N-acetylglucosamine.</text>
</comment>
<comment type="catalytic activity">
    <reaction evidence="1">
        <text>phosphoenolpyruvate + UDP-N-acetyl-alpha-D-glucosamine = UDP-N-acetyl-3-O-(1-carboxyvinyl)-alpha-D-glucosamine + phosphate</text>
        <dbReference type="Rhea" id="RHEA:18681"/>
        <dbReference type="ChEBI" id="CHEBI:43474"/>
        <dbReference type="ChEBI" id="CHEBI:57705"/>
        <dbReference type="ChEBI" id="CHEBI:58702"/>
        <dbReference type="ChEBI" id="CHEBI:68483"/>
        <dbReference type="EC" id="2.5.1.7"/>
    </reaction>
</comment>
<comment type="pathway">
    <text evidence="1">Cell wall biogenesis; peptidoglycan biosynthesis.</text>
</comment>
<comment type="subcellular location">
    <subcellularLocation>
        <location evidence="1">Cytoplasm</location>
    </subcellularLocation>
</comment>
<comment type="similarity">
    <text evidence="1">Belongs to the EPSP synthase family. MurA subfamily.</text>
</comment>
<proteinExistence type="inferred from homology"/>
<gene>
    <name evidence="1" type="primary">murA</name>
    <name type="ordered locus">Bcep18194_A3521</name>
</gene>
<protein>
    <recommendedName>
        <fullName evidence="1">UDP-N-acetylglucosamine 1-carboxyvinyltransferase</fullName>
        <ecNumber evidence="1">2.5.1.7</ecNumber>
    </recommendedName>
    <alternativeName>
        <fullName evidence="1">Enoylpyruvate transferase</fullName>
    </alternativeName>
    <alternativeName>
        <fullName evidence="1">UDP-N-acetylglucosamine enolpyruvyl transferase</fullName>
        <shortName evidence="1">EPT</shortName>
    </alternativeName>
</protein>
<keyword id="KW-0131">Cell cycle</keyword>
<keyword id="KW-0132">Cell division</keyword>
<keyword id="KW-0133">Cell shape</keyword>
<keyword id="KW-0961">Cell wall biogenesis/degradation</keyword>
<keyword id="KW-0963">Cytoplasm</keyword>
<keyword id="KW-0573">Peptidoglycan synthesis</keyword>
<keyword id="KW-0670">Pyruvate</keyword>
<keyword id="KW-0808">Transferase</keyword>
<dbReference type="EC" id="2.5.1.7" evidence="1"/>
<dbReference type="EMBL" id="CP000151">
    <property type="protein sequence ID" value="ABB07123.1"/>
    <property type="molecule type" value="Genomic_DNA"/>
</dbReference>
<dbReference type="RefSeq" id="WP_041492724.1">
    <property type="nucleotide sequence ID" value="NC_007510.1"/>
</dbReference>
<dbReference type="SMR" id="Q39K93"/>
<dbReference type="GeneID" id="45093436"/>
<dbReference type="KEGG" id="bur:Bcep18194_A3521"/>
<dbReference type="PATRIC" id="fig|482957.22.peg.366"/>
<dbReference type="HOGENOM" id="CLU_027387_0_0_4"/>
<dbReference type="UniPathway" id="UPA00219"/>
<dbReference type="Proteomes" id="UP000002705">
    <property type="component" value="Chromosome 1"/>
</dbReference>
<dbReference type="GO" id="GO:0005737">
    <property type="term" value="C:cytoplasm"/>
    <property type="evidence" value="ECO:0007669"/>
    <property type="project" value="UniProtKB-SubCell"/>
</dbReference>
<dbReference type="GO" id="GO:0008760">
    <property type="term" value="F:UDP-N-acetylglucosamine 1-carboxyvinyltransferase activity"/>
    <property type="evidence" value="ECO:0007669"/>
    <property type="project" value="UniProtKB-UniRule"/>
</dbReference>
<dbReference type="GO" id="GO:0051301">
    <property type="term" value="P:cell division"/>
    <property type="evidence" value="ECO:0007669"/>
    <property type="project" value="UniProtKB-KW"/>
</dbReference>
<dbReference type="GO" id="GO:0071555">
    <property type="term" value="P:cell wall organization"/>
    <property type="evidence" value="ECO:0007669"/>
    <property type="project" value="UniProtKB-KW"/>
</dbReference>
<dbReference type="GO" id="GO:0009252">
    <property type="term" value="P:peptidoglycan biosynthetic process"/>
    <property type="evidence" value="ECO:0007669"/>
    <property type="project" value="UniProtKB-UniRule"/>
</dbReference>
<dbReference type="GO" id="GO:0008360">
    <property type="term" value="P:regulation of cell shape"/>
    <property type="evidence" value="ECO:0007669"/>
    <property type="project" value="UniProtKB-KW"/>
</dbReference>
<dbReference type="GO" id="GO:0019277">
    <property type="term" value="P:UDP-N-acetylgalactosamine biosynthetic process"/>
    <property type="evidence" value="ECO:0007669"/>
    <property type="project" value="InterPro"/>
</dbReference>
<dbReference type="CDD" id="cd01555">
    <property type="entry name" value="UdpNAET"/>
    <property type="match status" value="1"/>
</dbReference>
<dbReference type="FunFam" id="3.65.10.10:FF:000001">
    <property type="entry name" value="UDP-N-acetylglucosamine 1-carboxyvinyltransferase"/>
    <property type="match status" value="1"/>
</dbReference>
<dbReference type="Gene3D" id="3.65.10.10">
    <property type="entry name" value="Enolpyruvate transferase domain"/>
    <property type="match status" value="2"/>
</dbReference>
<dbReference type="HAMAP" id="MF_00111">
    <property type="entry name" value="MurA"/>
    <property type="match status" value="1"/>
</dbReference>
<dbReference type="InterPro" id="IPR001986">
    <property type="entry name" value="Enolpyruvate_Tfrase_dom"/>
</dbReference>
<dbReference type="InterPro" id="IPR036968">
    <property type="entry name" value="Enolpyruvate_Tfrase_sf"/>
</dbReference>
<dbReference type="InterPro" id="IPR050068">
    <property type="entry name" value="MurA_subfamily"/>
</dbReference>
<dbReference type="InterPro" id="IPR013792">
    <property type="entry name" value="RNA3'P_cycl/enolpyr_Trfase_a/b"/>
</dbReference>
<dbReference type="InterPro" id="IPR005750">
    <property type="entry name" value="UDP_GlcNAc_COvinyl_MurA"/>
</dbReference>
<dbReference type="NCBIfam" id="TIGR01072">
    <property type="entry name" value="murA"/>
    <property type="match status" value="1"/>
</dbReference>
<dbReference type="NCBIfam" id="NF006873">
    <property type="entry name" value="PRK09369.1"/>
    <property type="match status" value="1"/>
</dbReference>
<dbReference type="PANTHER" id="PTHR43783">
    <property type="entry name" value="UDP-N-ACETYLGLUCOSAMINE 1-CARBOXYVINYLTRANSFERASE"/>
    <property type="match status" value="1"/>
</dbReference>
<dbReference type="PANTHER" id="PTHR43783:SF1">
    <property type="entry name" value="UDP-N-ACETYLGLUCOSAMINE 1-CARBOXYVINYLTRANSFERASE"/>
    <property type="match status" value="1"/>
</dbReference>
<dbReference type="Pfam" id="PF00275">
    <property type="entry name" value="EPSP_synthase"/>
    <property type="match status" value="1"/>
</dbReference>
<dbReference type="SUPFAM" id="SSF55205">
    <property type="entry name" value="EPT/RTPC-like"/>
    <property type="match status" value="1"/>
</dbReference>
<organism>
    <name type="scientific">Burkholderia lata (strain ATCC 17760 / DSM 23089 / LMG 22485 / NCIMB 9086 / R18194 / 383)</name>
    <dbReference type="NCBI Taxonomy" id="482957"/>
    <lineage>
        <taxon>Bacteria</taxon>
        <taxon>Pseudomonadati</taxon>
        <taxon>Pseudomonadota</taxon>
        <taxon>Betaproteobacteria</taxon>
        <taxon>Burkholderiales</taxon>
        <taxon>Burkholderiaceae</taxon>
        <taxon>Burkholderia</taxon>
        <taxon>Burkholderia cepacia complex</taxon>
    </lineage>
</organism>
<name>MURA_BURL3</name>
<reference key="1">
    <citation type="submission" date="2005-10" db="EMBL/GenBank/DDBJ databases">
        <title>Complete sequence of chromosome 1 of Burkholderia sp. 383.</title>
        <authorList>
            <consortium name="US DOE Joint Genome Institute"/>
            <person name="Copeland A."/>
            <person name="Lucas S."/>
            <person name="Lapidus A."/>
            <person name="Barry K."/>
            <person name="Detter J.C."/>
            <person name="Glavina T."/>
            <person name="Hammon N."/>
            <person name="Israni S."/>
            <person name="Pitluck S."/>
            <person name="Chain P."/>
            <person name="Malfatti S."/>
            <person name="Shin M."/>
            <person name="Vergez L."/>
            <person name="Schmutz J."/>
            <person name="Larimer F."/>
            <person name="Land M."/>
            <person name="Kyrpides N."/>
            <person name="Lykidis A."/>
            <person name="Richardson P."/>
        </authorList>
    </citation>
    <scope>NUCLEOTIDE SEQUENCE [LARGE SCALE GENOMIC DNA]</scope>
    <source>
        <strain>ATCC 17760 / DSM 23089 / LMG 22485 / NCIMB 9086 / R18194 / 383</strain>
    </source>
</reference>
<accession>Q39K93</accession>
<evidence type="ECO:0000255" key="1">
    <source>
        <dbReference type="HAMAP-Rule" id="MF_00111"/>
    </source>
</evidence>
<sequence length="449" mass="47666">MQVTVNERDAVQSVATAHPAANGESHGHGMDKLVIEGGHRLSGEIVVSGAKNAALPILCAGLLTGDPVDLDNVPNLKDVRTTLKVLNQMGVKSETDGCRVQLDASRVDNLVAPYELVKTMRASILVLGPLLARFGEAKVSLPGGCAIGARPVDQHIKGLQAMGAEISIEHGFIEARAKRLKGARIVTDMITVTGTENLLMAATLADGETVIENAAREPEVSDLAHLLVAMGAKIDGIGTDRLVIQGVERLHGARHSVIPDRIEAGTFLCAVAAAGGDVRLTGVRPHILDAVIDKLREAGVSIEEGDSWLRVKMDRRPSAVTIRTSEYPAFPTDMQAQFMALNTVATGTAQVVETIFENRFMHVQELNRLGANITIDGNTALVTGVDKLSGANVMATDLRASASLVIAGLRAEGETLVDRIYHLDRGYDRMEAKLTAVGANVRRLSGSQA</sequence>